<name>VKT2_DABSI</name>
<proteinExistence type="evidence at protein level"/>
<protein>
    <recommendedName>
        <fullName>Kunitz-type serine protease inhibitor 2</fullName>
    </recommendedName>
    <alternativeName>
        <fullName>RVV-II</fullName>
    </alternativeName>
    <alternativeName>
        <fullName>Venom basic protease inhibitor 2</fullName>
    </alternativeName>
    <alternativeName>
        <fullName>Venom basic protease inhibitor II</fullName>
    </alternativeName>
</protein>
<feature type="chain" id="PRO_0000155446" description="Kunitz-type serine protease inhibitor 2">
    <location>
        <begin position="1"/>
        <end position="60"/>
    </location>
</feature>
<feature type="domain" description="BPTI/Kunitz inhibitor" evidence="2">
    <location>
        <begin position="7"/>
        <end position="57"/>
    </location>
</feature>
<feature type="site" description="Reactive bond for trypsin" evidence="1">
    <location>
        <begin position="17"/>
        <end position="18"/>
    </location>
</feature>
<feature type="disulfide bond" evidence="2 3">
    <location>
        <begin position="7"/>
        <end position="57"/>
    </location>
</feature>
<feature type="disulfide bond" evidence="2 3">
    <location>
        <begin position="16"/>
        <end position="40"/>
    </location>
</feature>
<feature type="disulfide bond" evidence="2 3">
    <location>
        <begin position="32"/>
        <end position="53"/>
    </location>
</feature>
<accession>P00990</accession>
<sequence length="60" mass="6850">HDRPTFCNLAPESGRCRGHLRRIYYNLESNKCKVFFYGGCGGNANNFETRDECRETCGGK</sequence>
<organism>
    <name type="scientific">Daboia siamensis</name>
    <name type="common">Eastern Russel's viper</name>
    <name type="synonym">Daboia russelii siamensis</name>
    <dbReference type="NCBI Taxonomy" id="343250"/>
    <lineage>
        <taxon>Eukaryota</taxon>
        <taxon>Metazoa</taxon>
        <taxon>Chordata</taxon>
        <taxon>Craniata</taxon>
        <taxon>Vertebrata</taxon>
        <taxon>Euteleostomi</taxon>
        <taxon>Lepidosauria</taxon>
        <taxon>Squamata</taxon>
        <taxon>Bifurcata</taxon>
        <taxon>Unidentata</taxon>
        <taxon>Episquamata</taxon>
        <taxon>Toxicofera</taxon>
        <taxon>Serpentes</taxon>
        <taxon>Colubroidea</taxon>
        <taxon>Viperidae</taxon>
        <taxon>Viperinae</taxon>
        <taxon>Daboia</taxon>
    </lineage>
</organism>
<keyword id="KW-0903">Direct protein sequencing</keyword>
<keyword id="KW-1015">Disulfide bond</keyword>
<keyword id="KW-0646">Protease inhibitor</keyword>
<keyword id="KW-0964">Secreted</keyword>
<keyword id="KW-0722">Serine protease inhibitor</keyword>
<dbReference type="SMR" id="P00990"/>
<dbReference type="GO" id="GO:0005615">
    <property type="term" value="C:extracellular space"/>
    <property type="evidence" value="ECO:0007669"/>
    <property type="project" value="TreeGrafter"/>
</dbReference>
<dbReference type="GO" id="GO:0004867">
    <property type="term" value="F:serine-type endopeptidase inhibitor activity"/>
    <property type="evidence" value="ECO:0007669"/>
    <property type="project" value="UniProtKB-KW"/>
</dbReference>
<dbReference type="FunFam" id="4.10.410.10:FF:000021">
    <property type="entry name" value="Serine protease inhibitor, putative"/>
    <property type="match status" value="1"/>
</dbReference>
<dbReference type="Gene3D" id="4.10.410.10">
    <property type="entry name" value="Pancreatic trypsin inhibitor Kunitz domain"/>
    <property type="match status" value="1"/>
</dbReference>
<dbReference type="InterPro" id="IPR002223">
    <property type="entry name" value="Kunitz_BPTI"/>
</dbReference>
<dbReference type="InterPro" id="IPR036880">
    <property type="entry name" value="Kunitz_BPTI_sf"/>
</dbReference>
<dbReference type="InterPro" id="IPR020901">
    <property type="entry name" value="Prtase_inh_Kunz-CS"/>
</dbReference>
<dbReference type="InterPro" id="IPR050098">
    <property type="entry name" value="TFPI/VKTCI-like"/>
</dbReference>
<dbReference type="PANTHER" id="PTHR10083:SF374">
    <property type="entry name" value="BPTI_KUNITZ INHIBITOR DOMAIN-CONTAINING PROTEIN"/>
    <property type="match status" value="1"/>
</dbReference>
<dbReference type="PANTHER" id="PTHR10083">
    <property type="entry name" value="KUNITZ-TYPE PROTEASE INHIBITOR-RELATED"/>
    <property type="match status" value="1"/>
</dbReference>
<dbReference type="Pfam" id="PF00014">
    <property type="entry name" value="Kunitz_BPTI"/>
    <property type="match status" value="1"/>
</dbReference>
<dbReference type="PRINTS" id="PR00759">
    <property type="entry name" value="BASICPTASE"/>
</dbReference>
<dbReference type="SMART" id="SM00131">
    <property type="entry name" value="KU"/>
    <property type="match status" value="1"/>
</dbReference>
<dbReference type="SUPFAM" id="SSF57362">
    <property type="entry name" value="BPTI-like"/>
    <property type="match status" value="1"/>
</dbReference>
<dbReference type="PROSITE" id="PS00280">
    <property type="entry name" value="BPTI_KUNITZ_1"/>
    <property type="match status" value="1"/>
</dbReference>
<dbReference type="PROSITE" id="PS50279">
    <property type="entry name" value="BPTI_KUNITZ_2"/>
    <property type="match status" value="1"/>
</dbReference>
<reference key="1">
    <citation type="journal article" date="1974" name="J. Biochem.">
        <title>Snake venom proteinase inhibitors. II. Chemical structure of inhibitor II isolated from the venom of Russell's viper (Vipera russelli).</title>
        <authorList>
            <person name="Takahashi H."/>
            <person name="Iwanaga S."/>
            <person name="Kitagawa T."/>
            <person name="Hokama Y."/>
            <person name="Suzuki T."/>
        </authorList>
    </citation>
    <scope>PROTEIN SEQUENCE</scope>
    <scope>FUNCTION</scope>
    <scope>DISULFIDE BONDS</scope>
    <source>
        <tissue>Venom</tissue>
    </source>
</reference>
<evidence type="ECO:0000250" key="1"/>
<evidence type="ECO:0000255" key="2">
    <source>
        <dbReference type="PROSITE-ProRule" id="PRU00031"/>
    </source>
</evidence>
<evidence type="ECO:0000269" key="3">
    <source>
    </source>
</evidence>
<evidence type="ECO:0000305" key="4"/>
<comment type="function">
    <text evidence="3">Serine protease inhibitor.</text>
</comment>
<comment type="subcellular location">
    <subcellularLocation>
        <location>Secreted</location>
    </subcellularLocation>
</comment>
<comment type="tissue specificity">
    <text>Expressed by the venom gland.</text>
</comment>
<comment type="similarity">
    <text evidence="4">Belongs to the venom Kunitz-type family.</text>
</comment>